<gene>
    <name evidence="1" type="primary">cysD</name>
    <name type="ordered locus">Ent638_3223</name>
</gene>
<feature type="chain" id="PRO_1000057438" description="Sulfate adenylyltransferase subunit 2">
    <location>
        <begin position="1"/>
        <end position="302"/>
    </location>
</feature>
<organism>
    <name type="scientific">Enterobacter sp. (strain 638)</name>
    <dbReference type="NCBI Taxonomy" id="399742"/>
    <lineage>
        <taxon>Bacteria</taxon>
        <taxon>Pseudomonadati</taxon>
        <taxon>Pseudomonadota</taxon>
        <taxon>Gammaproteobacteria</taxon>
        <taxon>Enterobacterales</taxon>
        <taxon>Enterobacteriaceae</taxon>
        <taxon>Enterobacter</taxon>
    </lineage>
</organism>
<accession>A4WDV7</accession>
<proteinExistence type="inferred from homology"/>
<name>CYSD_ENT38</name>
<evidence type="ECO:0000255" key="1">
    <source>
        <dbReference type="HAMAP-Rule" id="MF_00064"/>
    </source>
</evidence>
<protein>
    <recommendedName>
        <fullName evidence="1">Sulfate adenylyltransferase subunit 2</fullName>
        <ecNumber evidence="1">2.7.7.4</ecNumber>
    </recommendedName>
    <alternativeName>
        <fullName evidence="1">ATP-sulfurylase small subunit</fullName>
    </alternativeName>
    <alternativeName>
        <fullName evidence="1">Sulfate adenylate transferase</fullName>
        <shortName evidence="1">SAT</shortName>
    </alternativeName>
</protein>
<reference key="1">
    <citation type="journal article" date="2010" name="PLoS Genet.">
        <title>Genome sequence of the plant growth promoting endophytic bacterium Enterobacter sp. 638.</title>
        <authorList>
            <person name="Taghavi S."/>
            <person name="van der Lelie D."/>
            <person name="Hoffman A."/>
            <person name="Zhang Y.B."/>
            <person name="Walla M.D."/>
            <person name="Vangronsveld J."/>
            <person name="Newman L."/>
            <person name="Monchy S."/>
        </authorList>
    </citation>
    <scope>NUCLEOTIDE SEQUENCE [LARGE SCALE GENOMIC DNA]</scope>
    <source>
        <strain>638</strain>
    </source>
</reference>
<keyword id="KW-0067">ATP-binding</keyword>
<keyword id="KW-0547">Nucleotide-binding</keyword>
<keyword id="KW-0548">Nucleotidyltransferase</keyword>
<keyword id="KW-0808">Transferase</keyword>
<dbReference type="EC" id="2.7.7.4" evidence="1"/>
<dbReference type="EMBL" id="CP000653">
    <property type="protein sequence ID" value="ABP61887.1"/>
    <property type="molecule type" value="Genomic_DNA"/>
</dbReference>
<dbReference type="RefSeq" id="WP_015960216.1">
    <property type="nucleotide sequence ID" value="NC_009436.1"/>
</dbReference>
<dbReference type="SMR" id="A4WDV7"/>
<dbReference type="STRING" id="399742.Ent638_3223"/>
<dbReference type="GeneID" id="93306181"/>
<dbReference type="KEGG" id="ent:Ent638_3223"/>
<dbReference type="eggNOG" id="COG0175">
    <property type="taxonomic scope" value="Bacteria"/>
</dbReference>
<dbReference type="HOGENOM" id="CLU_043026_0_0_6"/>
<dbReference type="OrthoDB" id="9772604at2"/>
<dbReference type="UniPathway" id="UPA00140">
    <property type="reaction ID" value="UER00204"/>
</dbReference>
<dbReference type="Proteomes" id="UP000000230">
    <property type="component" value="Chromosome"/>
</dbReference>
<dbReference type="GO" id="GO:0005524">
    <property type="term" value="F:ATP binding"/>
    <property type="evidence" value="ECO:0007669"/>
    <property type="project" value="UniProtKB-KW"/>
</dbReference>
<dbReference type="GO" id="GO:0004781">
    <property type="term" value="F:sulfate adenylyltransferase (ATP) activity"/>
    <property type="evidence" value="ECO:0007669"/>
    <property type="project" value="UniProtKB-UniRule"/>
</dbReference>
<dbReference type="GO" id="GO:0070814">
    <property type="term" value="P:hydrogen sulfide biosynthetic process"/>
    <property type="evidence" value="ECO:0007669"/>
    <property type="project" value="UniProtKB-UniRule"/>
</dbReference>
<dbReference type="GO" id="GO:0000103">
    <property type="term" value="P:sulfate assimilation"/>
    <property type="evidence" value="ECO:0007669"/>
    <property type="project" value="UniProtKB-UniRule"/>
</dbReference>
<dbReference type="CDD" id="cd23946">
    <property type="entry name" value="Sulfate_adenylyltransferase_2"/>
    <property type="match status" value="1"/>
</dbReference>
<dbReference type="FunFam" id="3.40.50.620:FF:000002">
    <property type="entry name" value="Sulfate adenylyltransferase subunit 2"/>
    <property type="match status" value="1"/>
</dbReference>
<dbReference type="Gene3D" id="3.40.50.620">
    <property type="entry name" value="HUPs"/>
    <property type="match status" value="1"/>
</dbReference>
<dbReference type="HAMAP" id="MF_00064">
    <property type="entry name" value="Sulf_adenylyltr_sub2"/>
    <property type="match status" value="1"/>
</dbReference>
<dbReference type="InterPro" id="IPR002500">
    <property type="entry name" value="PAPS_reduct_dom"/>
</dbReference>
<dbReference type="InterPro" id="IPR014729">
    <property type="entry name" value="Rossmann-like_a/b/a_fold"/>
</dbReference>
<dbReference type="InterPro" id="IPR011784">
    <property type="entry name" value="SO4_adenylTrfase_ssu"/>
</dbReference>
<dbReference type="InterPro" id="IPR050128">
    <property type="entry name" value="Sulfate_adenylyltrnsfr_sub2"/>
</dbReference>
<dbReference type="NCBIfam" id="TIGR02039">
    <property type="entry name" value="CysD"/>
    <property type="match status" value="1"/>
</dbReference>
<dbReference type="NCBIfam" id="NF003587">
    <property type="entry name" value="PRK05253.1"/>
    <property type="match status" value="1"/>
</dbReference>
<dbReference type="NCBIfam" id="NF009214">
    <property type="entry name" value="PRK12563.1"/>
    <property type="match status" value="1"/>
</dbReference>
<dbReference type="PANTHER" id="PTHR43196">
    <property type="entry name" value="SULFATE ADENYLYLTRANSFERASE SUBUNIT 2"/>
    <property type="match status" value="1"/>
</dbReference>
<dbReference type="PANTHER" id="PTHR43196:SF1">
    <property type="entry name" value="SULFATE ADENYLYLTRANSFERASE SUBUNIT 2"/>
    <property type="match status" value="1"/>
</dbReference>
<dbReference type="Pfam" id="PF01507">
    <property type="entry name" value="PAPS_reduct"/>
    <property type="match status" value="1"/>
</dbReference>
<dbReference type="PIRSF" id="PIRSF002936">
    <property type="entry name" value="CysDAde_trans"/>
    <property type="match status" value="1"/>
</dbReference>
<dbReference type="SUPFAM" id="SSF52402">
    <property type="entry name" value="Adenine nucleotide alpha hydrolases-like"/>
    <property type="match status" value="1"/>
</dbReference>
<sequence length="302" mass="35158">MDQKRLTHLRQLEAESIHIIREVAAEFSNPVMMYSIGKDSSVMLHLARKAFYPGTLPFPLLHVDTGWKFREMYEFRDRTAKAYGCELLVHKNPEGVAMGINPFVHGSGKHTDIMKTEGLKQALNKYGFDAAFGGARRDEEKSRAKERIYSFRDRFHRWDPKNQRPELWHNYNGQINKGESIRVFPLSNWTELDIWQYIYLENIDIVPLYLAAERPVLERDGMLMMIDDDRIDLQPGEEIKNQMVRFRTLGCWPLTGAVESNAQTLPEIIEEMLVSTTSERQGRVIDRDQAGSMELKKRQGYF</sequence>
<comment type="function">
    <text evidence="1">With CysN forms the ATP sulfurylase (ATPS) that catalyzes the adenylation of sulfate producing adenosine 5'-phosphosulfate (APS) and diphosphate, the first enzymatic step in sulfur assimilation pathway. APS synthesis involves the formation of a high-energy phosphoric-sulfuric acid anhydride bond driven by GTP hydrolysis by CysN coupled to ATP hydrolysis by CysD.</text>
</comment>
<comment type="catalytic activity">
    <reaction evidence="1">
        <text>sulfate + ATP + H(+) = adenosine 5'-phosphosulfate + diphosphate</text>
        <dbReference type="Rhea" id="RHEA:18133"/>
        <dbReference type="ChEBI" id="CHEBI:15378"/>
        <dbReference type="ChEBI" id="CHEBI:16189"/>
        <dbReference type="ChEBI" id="CHEBI:30616"/>
        <dbReference type="ChEBI" id="CHEBI:33019"/>
        <dbReference type="ChEBI" id="CHEBI:58243"/>
        <dbReference type="EC" id="2.7.7.4"/>
    </reaction>
</comment>
<comment type="pathway">
    <text evidence="1">Sulfur metabolism; hydrogen sulfide biosynthesis; sulfite from sulfate: step 1/3.</text>
</comment>
<comment type="subunit">
    <text evidence="1">Heterodimer composed of CysD, the smaller subunit, and CysN.</text>
</comment>
<comment type="similarity">
    <text evidence="1">Belongs to the PAPS reductase family. CysD subfamily.</text>
</comment>